<sequence>MKSKTKTRRKAREYAVQALYSWQISKNDIYDVINHFKKNKTINEIDQIYFYELIIGITKNLKYLDELMRPYLSRTIQELGQIEKAILRISFFELDKRYDIPFKVTINESIELAKLFGAKDSHKFINGVLDKASLKLRKNNSNKN</sequence>
<feature type="chain" id="PRO_0000176519" description="Transcription antitermination protein NusB">
    <location>
        <begin position="1"/>
        <end position="144"/>
    </location>
</feature>
<dbReference type="EMBL" id="AE016826">
    <property type="protein sequence ID" value="AAO27120.1"/>
    <property type="molecule type" value="Genomic_DNA"/>
</dbReference>
<dbReference type="RefSeq" id="WP_011091521.1">
    <property type="nucleotide sequence ID" value="NC_004545.1"/>
</dbReference>
<dbReference type="SMR" id="P59452"/>
<dbReference type="STRING" id="224915.bbp_409"/>
<dbReference type="KEGG" id="bab:bbp_409"/>
<dbReference type="eggNOG" id="COG0781">
    <property type="taxonomic scope" value="Bacteria"/>
</dbReference>
<dbReference type="HOGENOM" id="CLU_087843_4_1_6"/>
<dbReference type="OrthoDB" id="9789556at2"/>
<dbReference type="Proteomes" id="UP000000601">
    <property type="component" value="Chromosome"/>
</dbReference>
<dbReference type="GO" id="GO:0005829">
    <property type="term" value="C:cytosol"/>
    <property type="evidence" value="ECO:0007669"/>
    <property type="project" value="TreeGrafter"/>
</dbReference>
<dbReference type="GO" id="GO:0003723">
    <property type="term" value="F:RNA binding"/>
    <property type="evidence" value="ECO:0007669"/>
    <property type="project" value="UniProtKB-UniRule"/>
</dbReference>
<dbReference type="GO" id="GO:0006353">
    <property type="term" value="P:DNA-templated transcription termination"/>
    <property type="evidence" value="ECO:0007669"/>
    <property type="project" value="UniProtKB-UniRule"/>
</dbReference>
<dbReference type="GO" id="GO:0031564">
    <property type="term" value="P:transcription antitermination"/>
    <property type="evidence" value="ECO:0007669"/>
    <property type="project" value="UniProtKB-KW"/>
</dbReference>
<dbReference type="CDD" id="cd00619">
    <property type="entry name" value="Terminator_NusB"/>
    <property type="match status" value="1"/>
</dbReference>
<dbReference type="FunFam" id="1.10.940.10:FF:000001">
    <property type="entry name" value="Transcription antitermination factor NusB"/>
    <property type="match status" value="1"/>
</dbReference>
<dbReference type="Gene3D" id="1.10.940.10">
    <property type="entry name" value="NusB-like"/>
    <property type="match status" value="1"/>
</dbReference>
<dbReference type="HAMAP" id="MF_00073">
    <property type="entry name" value="NusB"/>
    <property type="match status" value="1"/>
</dbReference>
<dbReference type="InterPro" id="IPR035926">
    <property type="entry name" value="NusB-like_sf"/>
</dbReference>
<dbReference type="InterPro" id="IPR011605">
    <property type="entry name" value="NusB_fam"/>
</dbReference>
<dbReference type="InterPro" id="IPR006027">
    <property type="entry name" value="NusB_RsmB_TIM44"/>
</dbReference>
<dbReference type="NCBIfam" id="TIGR01951">
    <property type="entry name" value="nusB"/>
    <property type="match status" value="1"/>
</dbReference>
<dbReference type="PANTHER" id="PTHR11078:SF3">
    <property type="entry name" value="ANTITERMINATION NUSB DOMAIN-CONTAINING PROTEIN"/>
    <property type="match status" value="1"/>
</dbReference>
<dbReference type="PANTHER" id="PTHR11078">
    <property type="entry name" value="N UTILIZATION SUBSTANCE PROTEIN B-RELATED"/>
    <property type="match status" value="1"/>
</dbReference>
<dbReference type="Pfam" id="PF01029">
    <property type="entry name" value="NusB"/>
    <property type="match status" value="1"/>
</dbReference>
<dbReference type="SUPFAM" id="SSF48013">
    <property type="entry name" value="NusB-like"/>
    <property type="match status" value="1"/>
</dbReference>
<accession>P59452</accession>
<protein>
    <recommendedName>
        <fullName evidence="1">Transcription antitermination protein NusB</fullName>
    </recommendedName>
    <alternativeName>
        <fullName evidence="1">Antitermination factor NusB</fullName>
    </alternativeName>
</protein>
<proteinExistence type="inferred from homology"/>
<organism>
    <name type="scientific">Buchnera aphidicola subsp. Baizongia pistaciae (strain Bp)</name>
    <dbReference type="NCBI Taxonomy" id="224915"/>
    <lineage>
        <taxon>Bacteria</taxon>
        <taxon>Pseudomonadati</taxon>
        <taxon>Pseudomonadota</taxon>
        <taxon>Gammaproteobacteria</taxon>
        <taxon>Enterobacterales</taxon>
        <taxon>Erwiniaceae</taxon>
        <taxon>Buchnera</taxon>
    </lineage>
</organism>
<evidence type="ECO:0000255" key="1">
    <source>
        <dbReference type="HAMAP-Rule" id="MF_00073"/>
    </source>
</evidence>
<keyword id="KW-1185">Reference proteome</keyword>
<keyword id="KW-0694">RNA-binding</keyword>
<keyword id="KW-0804">Transcription</keyword>
<keyword id="KW-0889">Transcription antitermination</keyword>
<keyword id="KW-0805">Transcription regulation</keyword>
<reference key="1">
    <citation type="journal article" date="2003" name="Proc. Natl. Acad. Sci. U.S.A.">
        <title>Reductive genome evolution in Buchnera aphidicola.</title>
        <authorList>
            <person name="van Ham R.C.H.J."/>
            <person name="Kamerbeek J."/>
            <person name="Palacios C."/>
            <person name="Rausell C."/>
            <person name="Abascal F."/>
            <person name="Bastolla U."/>
            <person name="Fernandez J.M."/>
            <person name="Jimenez L."/>
            <person name="Postigo M."/>
            <person name="Silva F.J."/>
            <person name="Tamames J."/>
            <person name="Viguera E."/>
            <person name="Latorre A."/>
            <person name="Valencia A."/>
            <person name="Moran F."/>
            <person name="Moya A."/>
        </authorList>
    </citation>
    <scope>NUCLEOTIDE SEQUENCE [LARGE SCALE GENOMIC DNA]</scope>
    <source>
        <strain>Bp</strain>
    </source>
</reference>
<comment type="function">
    <text evidence="1">Involved in transcription antitermination. Required for transcription of ribosomal RNA (rRNA) genes. Binds specifically to the boxA antiterminator sequence of the ribosomal RNA (rrn) operons.</text>
</comment>
<comment type="similarity">
    <text evidence="1">Belongs to the NusB family.</text>
</comment>
<gene>
    <name evidence="1" type="primary">nusB</name>
    <name type="ordered locus">bbp_409</name>
</gene>
<name>NUSB_BUCBP</name>